<organism>
    <name type="scientific">Mycoplasmopsis synoviae (strain 53)</name>
    <name type="common">Mycoplasma synoviae</name>
    <dbReference type="NCBI Taxonomy" id="262723"/>
    <lineage>
        <taxon>Bacteria</taxon>
        <taxon>Bacillati</taxon>
        <taxon>Mycoplasmatota</taxon>
        <taxon>Mycoplasmoidales</taxon>
        <taxon>Metamycoplasmataceae</taxon>
        <taxon>Mycoplasmopsis</taxon>
    </lineage>
</organism>
<proteinExistence type="inferred from homology"/>
<protein>
    <recommendedName>
        <fullName evidence="1">Small ribosomal subunit protein uS3</fullName>
    </recommendedName>
    <alternativeName>
        <fullName evidence="2">30S ribosomal protein S3</fullName>
    </alternativeName>
</protein>
<dbReference type="EMBL" id="AE017245">
    <property type="protein sequence ID" value="AAZ44044.1"/>
    <property type="molecule type" value="Genomic_DNA"/>
</dbReference>
<dbReference type="RefSeq" id="WP_011283773.1">
    <property type="nucleotide sequence ID" value="NC_007294.1"/>
</dbReference>
<dbReference type="SMR" id="Q4A5C7"/>
<dbReference type="STRING" id="262723.MS53_0637"/>
<dbReference type="KEGG" id="msy:MS53_0637"/>
<dbReference type="eggNOG" id="COG0092">
    <property type="taxonomic scope" value="Bacteria"/>
</dbReference>
<dbReference type="HOGENOM" id="CLU_058591_0_2_14"/>
<dbReference type="OrthoDB" id="9806396at2"/>
<dbReference type="Proteomes" id="UP000000549">
    <property type="component" value="Chromosome"/>
</dbReference>
<dbReference type="GO" id="GO:0022627">
    <property type="term" value="C:cytosolic small ribosomal subunit"/>
    <property type="evidence" value="ECO:0007669"/>
    <property type="project" value="TreeGrafter"/>
</dbReference>
<dbReference type="GO" id="GO:0003729">
    <property type="term" value="F:mRNA binding"/>
    <property type="evidence" value="ECO:0007669"/>
    <property type="project" value="UniProtKB-UniRule"/>
</dbReference>
<dbReference type="GO" id="GO:0019843">
    <property type="term" value="F:rRNA binding"/>
    <property type="evidence" value="ECO:0007669"/>
    <property type="project" value="UniProtKB-UniRule"/>
</dbReference>
<dbReference type="GO" id="GO:0003735">
    <property type="term" value="F:structural constituent of ribosome"/>
    <property type="evidence" value="ECO:0007669"/>
    <property type="project" value="InterPro"/>
</dbReference>
<dbReference type="GO" id="GO:0006412">
    <property type="term" value="P:translation"/>
    <property type="evidence" value="ECO:0007669"/>
    <property type="project" value="UniProtKB-UniRule"/>
</dbReference>
<dbReference type="CDD" id="cd02412">
    <property type="entry name" value="KH-II_30S_S3"/>
    <property type="match status" value="1"/>
</dbReference>
<dbReference type="FunFam" id="3.30.300.20:FF:000001">
    <property type="entry name" value="30S ribosomal protein S3"/>
    <property type="match status" value="1"/>
</dbReference>
<dbReference type="Gene3D" id="3.30.300.20">
    <property type="match status" value="1"/>
</dbReference>
<dbReference type="Gene3D" id="3.30.1140.32">
    <property type="entry name" value="Ribosomal protein S3, C-terminal domain"/>
    <property type="match status" value="1"/>
</dbReference>
<dbReference type="HAMAP" id="MF_01309_B">
    <property type="entry name" value="Ribosomal_uS3_B"/>
    <property type="match status" value="1"/>
</dbReference>
<dbReference type="InterPro" id="IPR004087">
    <property type="entry name" value="KH_dom"/>
</dbReference>
<dbReference type="InterPro" id="IPR015946">
    <property type="entry name" value="KH_dom-like_a/b"/>
</dbReference>
<dbReference type="InterPro" id="IPR004044">
    <property type="entry name" value="KH_dom_type_2"/>
</dbReference>
<dbReference type="InterPro" id="IPR009019">
    <property type="entry name" value="KH_sf_prok-type"/>
</dbReference>
<dbReference type="InterPro" id="IPR036419">
    <property type="entry name" value="Ribosomal_S3_C_sf"/>
</dbReference>
<dbReference type="InterPro" id="IPR005704">
    <property type="entry name" value="Ribosomal_uS3_bac-typ"/>
</dbReference>
<dbReference type="InterPro" id="IPR001351">
    <property type="entry name" value="Ribosomal_uS3_C"/>
</dbReference>
<dbReference type="NCBIfam" id="TIGR01009">
    <property type="entry name" value="rpsC_bact"/>
    <property type="match status" value="1"/>
</dbReference>
<dbReference type="PANTHER" id="PTHR11760">
    <property type="entry name" value="30S/40S RIBOSOMAL PROTEIN S3"/>
    <property type="match status" value="1"/>
</dbReference>
<dbReference type="PANTHER" id="PTHR11760:SF19">
    <property type="entry name" value="SMALL RIBOSOMAL SUBUNIT PROTEIN US3C"/>
    <property type="match status" value="1"/>
</dbReference>
<dbReference type="Pfam" id="PF07650">
    <property type="entry name" value="KH_2"/>
    <property type="match status" value="1"/>
</dbReference>
<dbReference type="Pfam" id="PF00189">
    <property type="entry name" value="Ribosomal_S3_C"/>
    <property type="match status" value="1"/>
</dbReference>
<dbReference type="SMART" id="SM00322">
    <property type="entry name" value="KH"/>
    <property type="match status" value="1"/>
</dbReference>
<dbReference type="SUPFAM" id="SSF54814">
    <property type="entry name" value="Prokaryotic type KH domain (KH-domain type II)"/>
    <property type="match status" value="1"/>
</dbReference>
<dbReference type="SUPFAM" id="SSF54821">
    <property type="entry name" value="Ribosomal protein S3 C-terminal domain"/>
    <property type="match status" value="1"/>
</dbReference>
<dbReference type="PROSITE" id="PS50823">
    <property type="entry name" value="KH_TYPE_2"/>
    <property type="match status" value="1"/>
</dbReference>
<keyword id="KW-1185">Reference proteome</keyword>
<keyword id="KW-0687">Ribonucleoprotein</keyword>
<keyword id="KW-0689">Ribosomal protein</keyword>
<keyword id="KW-0694">RNA-binding</keyword>
<keyword id="KW-0699">rRNA-binding</keyword>
<feature type="chain" id="PRO_0000230705" description="Small ribosomal subunit protein uS3">
    <location>
        <begin position="1"/>
        <end position="226"/>
    </location>
</feature>
<feature type="domain" description="KH type-2" evidence="1">
    <location>
        <begin position="39"/>
        <end position="109"/>
    </location>
</feature>
<evidence type="ECO:0000255" key="1">
    <source>
        <dbReference type="HAMAP-Rule" id="MF_01309"/>
    </source>
</evidence>
<evidence type="ECO:0000305" key="2"/>
<gene>
    <name evidence="1" type="primary">rpsC</name>
    <name type="ordered locus">MS53_0637</name>
</gene>
<sequence>MGQKVNPNGFRYGVTKAHNTTWFAHKATYGSKLVEDVKIYKFFDKFTRKFQIGKVEIQRDLNNKVSVFLHTSKPAAILGENGTNIKNLTVALQKHLKNKKLDVNLKVLTIKEPDLNARLLAEMIATKLENRESFRSAQKIAIRSALKAGAKGIKTAVSGRLNGVDMARTEGYSEGEMKLHTLRQDVSYATATARTTYGAIGVKVWVSLGEILQGDRTFHHASTKKN</sequence>
<reference key="1">
    <citation type="journal article" date="2005" name="J. Bacteriol.">
        <title>Swine and poultry pathogens: the complete genome sequences of two strains of Mycoplasma hyopneumoniae and a strain of Mycoplasma synoviae.</title>
        <authorList>
            <person name="Vasconcelos A.T.R."/>
            <person name="Ferreira H.B."/>
            <person name="Bizarro C.V."/>
            <person name="Bonatto S.L."/>
            <person name="Carvalho M.O."/>
            <person name="Pinto P.M."/>
            <person name="Almeida D.F."/>
            <person name="Almeida L.G.P."/>
            <person name="Almeida R."/>
            <person name="Alves-Junior L."/>
            <person name="Assuncao E.N."/>
            <person name="Azevedo V.A.C."/>
            <person name="Bogo M.R."/>
            <person name="Brigido M.M."/>
            <person name="Brocchi M."/>
            <person name="Burity H.A."/>
            <person name="Camargo A.A."/>
            <person name="Camargo S.S."/>
            <person name="Carepo M.S."/>
            <person name="Carraro D.M."/>
            <person name="de Mattos Cascardo J.C."/>
            <person name="Castro L.A."/>
            <person name="Cavalcanti G."/>
            <person name="Chemale G."/>
            <person name="Collevatti R.G."/>
            <person name="Cunha C.W."/>
            <person name="Dallagiovanna B."/>
            <person name="Dambros B.P."/>
            <person name="Dellagostin O.A."/>
            <person name="Falcao C."/>
            <person name="Fantinatti-Garboggini F."/>
            <person name="Felipe M.S.S."/>
            <person name="Fiorentin L."/>
            <person name="Franco G.R."/>
            <person name="Freitas N.S.A."/>
            <person name="Frias D."/>
            <person name="Grangeiro T.B."/>
            <person name="Grisard E.C."/>
            <person name="Guimaraes C.T."/>
            <person name="Hungria M."/>
            <person name="Jardim S.N."/>
            <person name="Krieger M.A."/>
            <person name="Laurino J.P."/>
            <person name="Lima L.F.A."/>
            <person name="Lopes M.I."/>
            <person name="Loreto E.L.S."/>
            <person name="Madeira H.M.F."/>
            <person name="Manfio G.P."/>
            <person name="Maranhao A.Q."/>
            <person name="Martinkovics C.T."/>
            <person name="Medeiros S.R.B."/>
            <person name="Moreira M.A.M."/>
            <person name="Neiva M."/>
            <person name="Ramalho-Neto C.E."/>
            <person name="Nicolas M.F."/>
            <person name="Oliveira S.C."/>
            <person name="Paixao R.F.C."/>
            <person name="Pedrosa F.O."/>
            <person name="Pena S.D.J."/>
            <person name="Pereira M."/>
            <person name="Pereira-Ferrari L."/>
            <person name="Piffer I."/>
            <person name="Pinto L.S."/>
            <person name="Potrich D.P."/>
            <person name="Salim A.C.M."/>
            <person name="Santos F.R."/>
            <person name="Schmitt R."/>
            <person name="Schneider M.P.C."/>
            <person name="Schrank A."/>
            <person name="Schrank I.S."/>
            <person name="Schuck A.F."/>
            <person name="Seuanez H.N."/>
            <person name="Silva D.W."/>
            <person name="Silva R."/>
            <person name="Silva S.C."/>
            <person name="Soares C.M.A."/>
            <person name="Souza K.R.L."/>
            <person name="Souza R.C."/>
            <person name="Staats C.C."/>
            <person name="Steffens M.B.R."/>
            <person name="Teixeira S.M.R."/>
            <person name="Urmenyi T.P."/>
            <person name="Vainstein M.H."/>
            <person name="Zuccherato L.W."/>
            <person name="Simpson A.J.G."/>
            <person name="Zaha A."/>
        </authorList>
    </citation>
    <scope>NUCLEOTIDE SEQUENCE [LARGE SCALE GENOMIC DNA]</scope>
    <source>
        <strain>53</strain>
    </source>
</reference>
<name>RS3_MYCS5</name>
<comment type="function">
    <text evidence="1">Binds the lower part of the 30S subunit head. Binds mRNA in the 70S ribosome, positioning it for translation.</text>
</comment>
<comment type="subunit">
    <text evidence="1">Part of the 30S ribosomal subunit. Forms a tight complex with proteins S10 and S14.</text>
</comment>
<comment type="similarity">
    <text evidence="1">Belongs to the universal ribosomal protein uS3 family.</text>
</comment>
<accession>Q4A5C7</accession>